<proteinExistence type="inferred from homology"/>
<protein>
    <recommendedName>
        <fullName evidence="1">Oxygen-dependent choline dehydrogenase</fullName>
        <shortName evidence="1">CDH</shortName>
        <shortName evidence="1">CHD</shortName>
        <ecNumber evidence="1">1.1.99.1</ecNumber>
    </recommendedName>
    <alternativeName>
        <fullName evidence="1">Betaine aldehyde dehydrogenase</fullName>
        <shortName evidence="1">BADH</shortName>
        <ecNumber evidence="1">1.2.1.8</ecNumber>
    </alternativeName>
</protein>
<dbReference type="EC" id="1.1.99.1" evidence="1"/>
<dbReference type="EC" id="1.2.1.8" evidence="1"/>
<dbReference type="EMBL" id="CP001172">
    <property type="protein sequence ID" value="ACJ57826.1"/>
    <property type="molecule type" value="Genomic_DNA"/>
</dbReference>
<dbReference type="RefSeq" id="WP_001021934.1">
    <property type="nucleotide sequence ID" value="NZ_CP001172.1"/>
</dbReference>
<dbReference type="SMR" id="B7GYG5"/>
<dbReference type="CAZy" id="AA3">
    <property type="family name" value="Auxiliary Activities 3"/>
</dbReference>
<dbReference type="GeneID" id="92892889"/>
<dbReference type="HOGENOM" id="CLU_002865_7_1_6"/>
<dbReference type="UniPathway" id="UPA00529">
    <property type="reaction ID" value="UER00385"/>
</dbReference>
<dbReference type="Proteomes" id="UP000006924">
    <property type="component" value="Chromosome"/>
</dbReference>
<dbReference type="GO" id="GO:0016020">
    <property type="term" value="C:membrane"/>
    <property type="evidence" value="ECO:0007669"/>
    <property type="project" value="TreeGrafter"/>
</dbReference>
<dbReference type="GO" id="GO:0008802">
    <property type="term" value="F:betaine-aldehyde dehydrogenase (NAD+) activity"/>
    <property type="evidence" value="ECO:0007669"/>
    <property type="project" value="UniProtKB-EC"/>
</dbReference>
<dbReference type="GO" id="GO:0008812">
    <property type="term" value="F:choline dehydrogenase activity"/>
    <property type="evidence" value="ECO:0007669"/>
    <property type="project" value="UniProtKB-UniRule"/>
</dbReference>
<dbReference type="GO" id="GO:0050660">
    <property type="term" value="F:flavin adenine dinucleotide binding"/>
    <property type="evidence" value="ECO:0007669"/>
    <property type="project" value="InterPro"/>
</dbReference>
<dbReference type="GO" id="GO:0019285">
    <property type="term" value="P:glycine betaine biosynthetic process from choline"/>
    <property type="evidence" value="ECO:0007669"/>
    <property type="project" value="UniProtKB-UniRule"/>
</dbReference>
<dbReference type="Gene3D" id="3.50.50.60">
    <property type="entry name" value="FAD/NAD(P)-binding domain"/>
    <property type="match status" value="1"/>
</dbReference>
<dbReference type="Gene3D" id="3.30.560.10">
    <property type="entry name" value="Glucose Oxidase, domain 3"/>
    <property type="match status" value="1"/>
</dbReference>
<dbReference type="HAMAP" id="MF_00750">
    <property type="entry name" value="Choline_dehydrogen"/>
    <property type="match status" value="1"/>
</dbReference>
<dbReference type="InterPro" id="IPR011533">
    <property type="entry name" value="BetA"/>
</dbReference>
<dbReference type="InterPro" id="IPR036188">
    <property type="entry name" value="FAD/NAD-bd_sf"/>
</dbReference>
<dbReference type="InterPro" id="IPR012132">
    <property type="entry name" value="GMC_OxRdtase"/>
</dbReference>
<dbReference type="InterPro" id="IPR000172">
    <property type="entry name" value="GMC_OxRdtase_N"/>
</dbReference>
<dbReference type="InterPro" id="IPR007867">
    <property type="entry name" value="GMC_OxRtase_C"/>
</dbReference>
<dbReference type="NCBIfam" id="TIGR01810">
    <property type="entry name" value="betA"/>
    <property type="match status" value="1"/>
</dbReference>
<dbReference type="NCBIfam" id="NF002550">
    <property type="entry name" value="PRK02106.1"/>
    <property type="match status" value="1"/>
</dbReference>
<dbReference type="PANTHER" id="PTHR11552:SF147">
    <property type="entry name" value="CHOLINE DEHYDROGENASE, MITOCHONDRIAL"/>
    <property type="match status" value="1"/>
</dbReference>
<dbReference type="PANTHER" id="PTHR11552">
    <property type="entry name" value="GLUCOSE-METHANOL-CHOLINE GMC OXIDOREDUCTASE"/>
    <property type="match status" value="1"/>
</dbReference>
<dbReference type="Pfam" id="PF05199">
    <property type="entry name" value="GMC_oxred_C"/>
    <property type="match status" value="1"/>
</dbReference>
<dbReference type="Pfam" id="PF00732">
    <property type="entry name" value="GMC_oxred_N"/>
    <property type="match status" value="1"/>
</dbReference>
<dbReference type="PIRSF" id="PIRSF000137">
    <property type="entry name" value="Alcohol_oxidase"/>
    <property type="match status" value="1"/>
</dbReference>
<dbReference type="SUPFAM" id="SSF54373">
    <property type="entry name" value="FAD-linked reductases, C-terminal domain"/>
    <property type="match status" value="1"/>
</dbReference>
<dbReference type="SUPFAM" id="SSF51905">
    <property type="entry name" value="FAD/NAD(P)-binding domain"/>
    <property type="match status" value="1"/>
</dbReference>
<dbReference type="PROSITE" id="PS00623">
    <property type="entry name" value="GMC_OXRED_1"/>
    <property type="match status" value="1"/>
</dbReference>
<dbReference type="PROSITE" id="PS00624">
    <property type="entry name" value="GMC_OXRED_2"/>
    <property type="match status" value="1"/>
</dbReference>
<feature type="chain" id="PRO_1000133315" description="Oxygen-dependent choline dehydrogenase">
    <location>
        <begin position="1"/>
        <end position="552"/>
    </location>
</feature>
<feature type="active site" description="Proton acceptor" evidence="1">
    <location>
        <position position="477"/>
    </location>
</feature>
<feature type="binding site" evidence="1">
    <location>
        <begin position="7"/>
        <end position="36"/>
    </location>
    <ligand>
        <name>FAD</name>
        <dbReference type="ChEBI" id="CHEBI:57692"/>
    </ligand>
</feature>
<evidence type="ECO:0000255" key="1">
    <source>
        <dbReference type="HAMAP-Rule" id="MF_00750"/>
    </source>
</evidence>
<reference key="1">
    <citation type="journal article" date="2008" name="J. Bacteriol.">
        <title>Comparative genome sequence analysis of multidrug-resistant Acinetobacter baumannii.</title>
        <authorList>
            <person name="Adams M.D."/>
            <person name="Goglin K."/>
            <person name="Molyneaux N."/>
            <person name="Hujer K.M."/>
            <person name="Lavender H."/>
            <person name="Jamison J.J."/>
            <person name="MacDonald I.J."/>
            <person name="Martin K.M."/>
            <person name="Russo T."/>
            <person name="Campagnari A.A."/>
            <person name="Hujer A.M."/>
            <person name="Bonomo R.A."/>
            <person name="Gill S.R."/>
        </authorList>
    </citation>
    <scope>NUCLEOTIDE SEQUENCE [LARGE SCALE GENOMIC DNA]</scope>
    <source>
        <strain>AB307-0294</strain>
    </source>
</reference>
<accession>B7GYG5</accession>
<name>BETA_ACIB3</name>
<keyword id="KW-0274">FAD</keyword>
<keyword id="KW-0285">Flavoprotein</keyword>
<keyword id="KW-0520">NAD</keyword>
<keyword id="KW-0560">Oxidoreductase</keyword>
<organism>
    <name type="scientific">Acinetobacter baumannii (strain AB307-0294)</name>
    <dbReference type="NCBI Taxonomy" id="557600"/>
    <lineage>
        <taxon>Bacteria</taxon>
        <taxon>Pseudomonadati</taxon>
        <taxon>Pseudomonadota</taxon>
        <taxon>Gammaproteobacteria</taxon>
        <taxon>Moraxellales</taxon>
        <taxon>Moraxellaceae</taxon>
        <taxon>Acinetobacter</taxon>
        <taxon>Acinetobacter calcoaceticus/baumannii complex</taxon>
    </lineage>
</organism>
<sequence>MNIKEYDYIIIGAGSAGNVLAARLTEDKDTTVLLLEAGGPDYRLDFRTQMPAALAYPLQGRRYNWAYLTDPEPHMNNRRMECGRGKGLGGSSLINGMCYIRGNAMDLEQWATHKGLENWTYADCLPYYKKAETRDIGGNDYHGDSGPVSVATPKNGNNVLFHAMVEAGVQAGYPRTDDLNGYQQEGFGPMDRTVTPKGRRSSTARGYLDMAKGRPNLTILTHATTNKILFNQKQAIGVEYIIGADQNNLQRALVKREVLLCAGAIASPQILQRSGVGQSTFLKSMDIDVVHDLPGVGENLQDHLEMYLQYKCKQPVSLYPALKWYNQPAIGAEWLFNGTGIGASNQFEAGGFIRSSDEFKWPNIQYHFLPVAINYNGSNAVKEHGFQAHVGSMRSPSRGRIKLKSKDPFAHPSILFNYMSTEQDWREFRDAIRITREIMHQPALDPYRGDEISPGKHLQTDAELDDFVRNHAETAYHPSCSCKMGEDEMAVVDGQGRVHGMNGLRVVDASIMPLIITGNLNATTIMIAEKIADQIRGREALPRSTAPFYVAS</sequence>
<comment type="function">
    <text evidence="1">Involved in the biosynthesis of the osmoprotectant glycine betaine. Catalyzes the oxidation of choline to betaine aldehyde and betaine aldehyde to glycine betaine at the same rate.</text>
</comment>
<comment type="catalytic activity">
    <reaction evidence="1">
        <text>choline + A = betaine aldehyde + AH2</text>
        <dbReference type="Rhea" id="RHEA:17433"/>
        <dbReference type="ChEBI" id="CHEBI:13193"/>
        <dbReference type="ChEBI" id="CHEBI:15354"/>
        <dbReference type="ChEBI" id="CHEBI:15710"/>
        <dbReference type="ChEBI" id="CHEBI:17499"/>
        <dbReference type="EC" id="1.1.99.1"/>
    </reaction>
</comment>
<comment type="catalytic activity">
    <reaction evidence="1">
        <text>betaine aldehyde + NAD(+) + H2O = glycine betaine + NADH + 2 H(+)</text>
        <dbReference type="Rhea" id="RHEA:15305"/>
        <dbReference type="ChEBI" id="CHEBI:15377"/>
        <dbReference type="ChEBI" id="CHEBI:15378"/>
        <dbReference type="ChEBI" id="CHEBI:15710"/>
        <dbReference type="ChEBI" id="CHEBI:17750"/>
        <dbReference type="ChEBI" id="CHEBI:57540"/>
        <dbReference type="ChEBI" id="CHEBI:57945"/>
        <dbReference type="EC" id="1.2.1.8"/>
    </reaction>
</comment>
<comment type="cofactor">
    <cofactor evidence="1">
        <name>FAD</name>
        <dbReference type="ChEBI" id="CHEBI:57692"/>
    </cofactor>
</comment>
<comment type="pathway">
    <text evidence="1">Amine and polyamine biosynthesis; betaine biosynthesis via choline pathway; betaine aldehyde from choline (cytochrome c reductase route): step 1/1.</text>
</comment>
<comment type="similarity">
    <text evidence="1">Belongs to the GMC oxidoreductase family.</text>
</comment>
<gene>
    <name evidence="1" type="primary">betA</name>
    <name type="ordered locus">ABBFA_002684</name>
</gene>